<feature type="transit peptide" description="Mitochondrion" evidence="1">
    <location>
        <begin position="1"/>
        <end position="26"/>
    </location>
</feature>
<feature type="chain" id="PRO_0000451874" description="Isocitrate dehydrogenase (NAD(+)), mitochondrial" evidence="1">
    <location>
        <begin position="27"/>
        <end position="470"/>
    </location>
</feature>
<feature type="binding site" evidence="3 9">
    <location>
        <begin position="138"/>
        <end position="140"/>
    </location>
    <ligand>
        <name>NAD(+)</name>
        <dbReference type="ChEBI" id="CHEBI:57540"/>
    </ligand>
</feature>
<feature type="binding site" evidence="3 11">
    <location>
        <begin position="157"/>
        <end position="163"/>
    </location>
    <ligand>
        <name>D-threo-isocitrate</name>
        <dbReference type="ChEBI" id="CHEBI:15562"/>
    </ligand>
</feature>
<feature type="binding site" evidence="3 9">
    <location>
        <position position="159"/>
    </location>
    <ligand>
        <name>NAD(+)</name>
        <dbReference type="ChEBI" id="CHEBI:57540"/>
    </ligand>
</feature>
<feature type="binding site" evidence="3 11">
    <location>
        <position position="193"/>
    </location>
    <ligand>
        <name>D-threo-isocitrate</name>
        <dbReference type="ChEBI" id="CHEBI:15562"/>
    </ligand>
</feature>
<feature type="binding site" evidence="3 11">
    <location>
        <position position="200"/>
    </location>
    <ligand>
        <name>D-threo-isocitrate</name>
        <dbReference type="ChEBI" id="CHEBI:15562"/>
    </ligand>
</feature>
<feature type="binding site" evidence="3 11">
    <location>
        <position position="275"/>
    </location>
    <ligand>
        <name>D-threo-isocitrate</name>
        <dbReference type="ChEBI" id="CHEBI:15562"/>
    </ligand>
</feature>
<feature type="binding site" evidence="3 11">
    <location>
        <position position="319"/>
    </location>
    <ligand>
        <name>D-threo-isocitrate</name>
        <dbReference type="ChEBI" id="CHEBI:15562"/>
    </ligand>
</feature>
<feature type="binding site" evidence="3 10">
    <location>
        <position position="319"/>
    </location>
    <ligand>
        <name>Mg(2+)</name>
        <dbReference type="ChEBI" id="CHEBI:18420"/>
    </ligand>
</feature>
<feature type="binding site" evidence="3 9">
    <location>
        <position position="324"/>
    </location>
    <ligand>
        <name>NAD(+)</name>
        <dbReference type="ChEBI" id="CHEBI:57540"/>
    </ligand>
</feature>
<feature type="binding site" evidence="3 11">
    <location>
        <position position="343"/>
    </location>
    <ligand>
        <name>D-threo-isocitrate</name>
        <dbReference type="ChEBI" id="CHEBI:15562"/>
    </ligand>
</feature>
<feature type="binding site" evidence="3 10">
    <location>
        <position position="343"/>
    </location>
    <ligand>
        <name>Mg(2+)</name>
        <dbReference type="ChEBI" id="CHEBI:18420"/>
    </ligand>
</feature>
<feature type="binding site" evidence="3 10">
    <location>
        <position position="347"/>
    </location>
    <ligand>
        <name>Mg(2+)</name>
        <dbReference type="ChEBI" id="CHEBI:18420"/>
    </ligand>
</feature>
<feature type="binding site" evidence="3 9">
    <location>
        <begin position="380"/>
        <end position="385"/>
    </location>
    <ligand>
        <name>NAD(+)</name>
        <dbReference type="ChEBI" id="CHEBI:57540"/>
    </ligand>
</feature>
<feature type="binding site" evidence="3 9 10">
    <location>
        <position position="399"/>
    </location>
    <ligand>
        <name>NAD(+)</name>
        <dbReference type="ChEBI" id="CHEBI:57540"/>
    </ligand>
</feature>
<feature type="mutagenesis site" description="Decreases affinity for NAD(+) 3-fold. Decreases affinity for NAD(+) 78-fold; when associated with H-386." evidence="2">
    <original>D</original>
    <variation>R</variation>
    <location>
        <position position="385"/>
    </location>
</feature>
<feature type="mutagenesis site" description="Decreases affinity for NAD(+) 78-fold; when associated with R-385." evidence="2">
    <original>M</original>
    <variation>H</variation>
    <location>
        <position position="386"/>
    </location>
</feature>
<feature type="sequence conflict" description="In Ref. 2; OUS46403." evidence="5" ref="2">
    <original>A</original>
    <variation>T</variation>
    <location>
        <position position="24"/>
    </location>
</feature>
<feature type="sequence conflict" description="In Ref. 2; OUS46403." evidence="5" ref="2">
    <original>C</original>
    <variation>S</variation>
    <location>
        <position position="59"/>
    </location>
</feature>
<feature type="strand" evidence="12">
    <location>
        <begin position="72"/>
        <end position="76"/>
    </location>
</feature>
<feature type="helix" evidence="12">
    <location>
        <begin position="79"/>
        <end position="91"/>
    </location>
</feature>
<feature type="turn" evidence="12">
    <location>
        <begin position="92"/>
        <end position="96"/>
    </location>
</feature>
<feature type="strand" evidence="12">
    <location>
        <begin position="102"/>
        <end position="106"/>
    </location>
</feature>
<feature type="helix" evidence="12">
    <location>
        <begin position="109"/>
        <end position="114"/>
    </location>
</feature>
<feature type="turn" evidence="12">
    <location>
        <begin position="115"/>
        <end position="117"/>
    </location>
</feature>
<feature type="helix" evidence="12">
    <location>
        <begin position="118"/>
        <end position="130"/>
    </location>
</feature>
<feature type="strand" evidence="12">
    <location>
        <begin position="132"/>
        <end position="135"/>
    </location>
</feature>
<feature type="helix" evidence="12">
    <location>
        <begin position="143"/>
        <end position="149"/>
    </location>
</feature>
<feature type="helix" evidence="12">
    <location>
        <begin position="159"/>
        <end position="165"/>
    </location>
</feature>
<feature type="strand" evidence="12">
    <location>
        <begin position="170"/>
        <end position="172"/>
    </location>
</feature>
<feature type="strand" evidence="12">
    <location>
        <begin position="184"/>
        <end position="187"/>
    </location>
</feature>
<feature type="strand" evidence="12">
    <location>
        <begin position="190"/>
        <end position="194"/>
    </location>
</feature>
<feature type="helix" evidence="12">
    <location>
        <begin position="198"/>
        <end position="201"/>
    </location>
</feature>
<feature type="strand" evidence="12">
    <location>
        <begin position="203"/>
        <end position="207"/>
    </location>
</feature>
<feature type="strand" evidence="12">
    <location>
        <begin position="209"/>
        <end position="221"/>
    </location>
</feature>
<feature type="turn" evidence="12">
    <location>
        <begin position="222"/>
        <end position="225"/>
    </location>
</feature>
<feature type="strand" evidence="12">
    <location>
        <begin position="228"/>
        <end position="235"/>
    </location>
</feature>
<feature type="strand" evidence="12">
    <location>
        <begin position="237"/>
        <end position="248"/>
    </location>
</feature>
<feature type="helix" evidence="12">
    <location>
        <begin position="252"/>
        <end position="266"/>
    </location>
</feature>
<feature type="strand" evidence="12">
    <location>
        <begin position="269"/>
        <end position="274"/>
    </location>
</feature>
<feature type="turn" evidence="12">
    <location>
        <begin position="276"/>
        <end position="278"/>
    </location>
</feature>
<feature type="helix" evidence="12">
    <location>
        <begin position="280"/>
        <end position="282"/>
    </location>
</feature>
<feature type="helix" evidence="12">
    <location>
        <begin position="283"/>
        <end position="296"/>
    </location>
</feature>
<feature type="helix" evidence="12">
    <location>
        <begin position="298"/>
        <end position="303"/>
    </location>
</feature>
<feature type="strand" evidence="12">
    <location>
        <begin position="314"/>
        <end position="317"/>
    </location>
</feature>
<feature type="helix" evidence="12">
    <location>
        <begin position="318"/>
        <end position="327"/>
    </location>
</feature>
<feature type="strand" evidence="12">
    <location>
        <begin position="333"/>
        <end position="337"/>
    </location>
</feature>
<feature type="helix" evidence="12">
    <location>
        <begin position="339"/>
        <end position="353"/>
    </location>
</feature>
<feature type="helix" evidence="12">
    <location>
        <begin position="356"/>
        <end position="358"/>
    </location>
</feature>
<feature type="strand" evidence="12">
    <location>
        <begin position="361"/>
        <end position="366"/>
    </location>
</feature>
<feature type="strand" evidence="12">
    <location>
        <begin position="372"/>
        <end position="377"/>
    </location>
</feature>
<feature type="strand" evidence="14">
    <location>
        <begin position="378"/>
        <end position="380"/>
    </location>
</feature>
<feature type="helix" evidence="12">
    <location>
        <begin position="384"/>
        <end position="391"/>
    </location>
</feature>
<feature type="helix" evidence="12">
    <location>
        <begin position="401"/>
        <end position="418"/>
    </location>
</feature>
<feature type="helix" evidence="12">
    <location>
        <begin position="422"/>
        <end position="441"/>
    </location>
</feature>
<feature type="helix" evidence="12">
    <location>
        <begin position="447"/>
        <end position="450"/>
    </location>
</feature>
<feature type="helix" evidence="13">
    <location>
        <begin position="451"/>
        <end position="453"/>
    </location>
</feature>
<feature type="helix" evidence="12">
    <location>
        <begin position="457"/>
        <end position="467"/>
    </location>
</feature>
<accession>A0A096P8D3</accession>
<accession>A0A1Y5IEA9</accession>
<comment type="function">
    <text evidence="6">Performs an essential role in the oxidative function of the tricarboxylic acid cycle and respiration (Probable). Catalyzes the decarboxylation of isocitrate to produce 2-oxoglutarate and generate NADH to provide electrons for energy production (Probable).</text>
</comment>
<comment type="catalytic activity">
    <reaction evidence="2">
        <text>D-threo-isocitrate + NAD(+) = 2-oxoglutarate + CO2 + NADH</text>
        <dbReference type="Rhea" id="RHEA:23632"/>
        <dbReference type="ChEBI" id="CHEBI:15562"/>
        <dbReference type="ChEBI" id="CHEBI:16526"/>
        <dbReference type="ChEBI" id="CHEBI:16810"/>
        <dbReference type="ChEBI" id="CHEBI:57540"/>
        <dbReference type="ChEBI" id="CHEBI:57945"/>
        <dbReference type="EC" id="1.1.1.41"/>
    </reaction>
    <physiologicalReaction direction="left-to-right" evidence="2">
        <dbReference type="Rhea" id="RHEA:23633"/>
    </physiologicalReaction>
</comment>
<comment type="cofactor">
    <cofactor evidence="2 3">
        <name>Mg(2+)</name>
        <dbReference type="ChEBI" id="CHEBI:18420"/>
    </cofactor>
    <cofactor evidence="2">
        <name>Mn(2+)</name>
        <dbReference type="ChEBI" id="CHEBI:29035"/>
    </cofactor>
    <text evidence="3">Binds 1 Mg(2+) or Mn(2+) ion per subunit.</text>
</comment>
<comment type="activity regulation">
    <text evidence="2">The homodimer exhibits allosteric regulation by isocitrate.</text>
</comment>
<comment type="biophysicochemical properties">
    <kinetics>
        <KM evidence="2">226 uM for NAD(+) with Mg(2+) as cofactor</KM>
        <KM evidence="2">265 uM for NAD(+) with Mn(2+) as cofactor</KM>
    </kinetics>
    <phDependence>
        <text evidence="2">Optimum pH is 8.0 with Mn(2+) as cofactor and 8.5 with Mg(2+) as cofactor.</text>
    </phDependence>
    <temperatureDependence>
        <text evidence="2">Optimum temperature is 45 degrees Celsius.</text>
    </temperatureDependence>
</comment>
<comment type="subunit">
    <text evidence="2">Forms homodimers.</text>
</comment>
<comment type="subcellular location">
    <subcellularLocation>
        <location evidence="1">Mitochondrion</location>
    </subcellularLocation>
</comment>
<comment type="similarity">
    <text evidence="5">Belongs to the isocitrate and isopropylmalate dehydrogenases family.</text>
</comment>
<name>IDH_OSTTA</name>
<gene>
    <name evidence="4" type="primary">IDH</name>
    <name evidence="7" type="ordered locus">Ot_13g02940</name>
    <name evidence="8" type="ORF">BE221DRAFT_192402</name>
</gene>
<evidence type="ECO:0000255" key="1"/>
<evidence type="ECO:0000269" key="2">
    <source>
    </source>
</evidence>
<evidence type="ECO:0000269" key="3">
    <source ref="4"/>
</evidence>
<evidence type="ECO:0000303" key="4">
    <source>
    </source>
</evidence>
<evidence type="ECO:0000305" key="5"/>
<evidence type="ECO:0000305" key="6">
    <source>
    </source>
</evidence>
<evidence type="ECO:0000312" key="7">
    <source>
        <dbReference type="EMBL" id="CEG00228.1"/>
    </source>
</evidence>
<evidence type="ECO:0000312" key="8">
    <source>
        <dbReference type="EMBL" id="OUS46403.1"/>
    </source>
</evidence>
<evidence type="ECO:0007744" key="9">
    <source>
        <dbReference type="PDB" id="6IXN"/>
    </source>
</evidence>
<evidence type="ECO:0007744" key="10">
    <source>
        <dbReference type="PDB" id="6IXT"/>
    </source>
</evidence>
<evidence type="ECO:0007744" key="11">
    <source>
        <dbReference type="PDB" id="7E2W"/>
    </source>
</evidence>
<evidence type="ECO:0007829" key="12">
    <source>
        <dbReference type="PDB" id="6IXL"/>
    </source>
</evidence>
<evidence type="ECO:0007829" key="13">
    <source>
        <dbReference type="PDB" id="6IXN"/>
    </source>
</evidence>
<evidence type="ECO:0007829" key="14">
    <source>
        <dbReference type="PDB" id="6IXT"/>
    </source>
</evidence>
<keyword id="KW-0002">3D-structure</keyword>
<keyword id="KW-0460">Magnesium</keyword>
<keyword id="KW-0464">Manganese</keyword>
<keyword id="KW-0479">Metal-binding</keyword>
<keyword id="KW-0496">Mitochondrion</keyword>
<keyword id="KW-0520">NAD</keyword>
<keyword id="KW-0560">Oxidoreductase</keyword>
<keyword id="KW-1185">Reference proteome</keyword>
<keyword id="KW-0809">Transit peptide</keyword>
<keyword id="KW-0816">Tricarboxylic acid cycle</keyword>
<sequence length="470" mass="52553">MTRVERGRVLARAIERAVAHRASARRWTTTTRTPAWMVTGWMGGRGVDRSTAMTRFERCGSTASSKITAAPMVYVRGEEMTAYVMDLIRSRWIEPRVDVGGWETFDLRAKNRDDTEDRVLRDVIEAGKRIKAIFKEPTVTPTADQVKRLGLRKSWGSPNGAMRRGWNGITISRDTIHIDGVELGYKKPVLFERHAVGGEYSAGYKNVGKGKLTTTFTPSEGPDAGKTVVVDEREIVDEEAAVVTYHNPYDNVHDLARFFFGRCLEAKVTPYVVTKKTVFKWQEPFWQIMRTVFDEEFKAQFVAAGVMKEGEELVHLLSDAATMKLVQWRQGGFGMAAHNYDGDVLTDELAQVHKSPGFITSNLVGVHEDGTLIKEFEASHGTVADMDEARLRGEETSLNPLGMVEGLIGAMNHAADVHNIDRDRTHAFTTKMRTVIHQLFREGKGTRDLCGPSGLTTEQFIDAVAERLDA</sequence>
<organism>
    <name type="scientific">Ostreococcus tauri</name>
    <dbReference type="NCBI Taxonomy" id="70448"/>
    <lineage>
        <taxon>Eukaryota</taxon>
        <taxon>Viridiplantae</taxon>
        <taxon>Chlorophyta</taxon>
        <taxon>Mamiellophyceae</taxon>
        <taxon>Mamiellales</taxon>
        <taxon>Bathycoccaceae</taxon>
        <taxon>Ostreococcus</taxon>
    </lineage>
</organism>
<reference key="1">
    <citation type="journal article" date="2006" name="Proc. Natl. Acad. Sci. U.S.A.">
        <title>Genome analysis of the smallest free-living eukaryote Ostreococcus tauri unveils many unique features.</title>
        <authorList>
            <person name="Derelle E."/>
            <person name="Ferraz C."/>
            <person name="Rombauts S."/>
            <person name="Rouze P."/>
            <person name="Worden A.Z."/>
            <person name="Robbens S."/>
            <person name="Partensky F."/>
            <person name="Degroeve S."/>
            <person name="Echeynie S."/>
            <person name="Cooke R."/>
            <person name="Saeys Y."/>
            <person name="Wuyts J."/>
            <person name="Jabbari K."/>
            <person name="Bowler C."/>
            <person name="Panaud O."/>
            <person name="Piegu B."/>
            <person name="Ball S.G."/>
            <person name="Ral J.-P."/>
            <person name="Bouget F.-Y."/>
            <person name="Piganeau G."/>
            <person name="De Baets B."/>
            <person name="Picard A."/>
            <person name="Delseny M."/>
            <person name="Demaille J."/>
            <person name="Van de Peer Y."/>
            <person name="Moreau H."/>
        </authorList>
    </citation>
    <scope>NUCLEOTIDE SEQUENCE [LARGE SCALE GENOMIC DNA]</scope>
    <source>
        <strain>OTTH0595</strain>
    </source>
</reference>
<reference key="2">
    <citation type="journal article" date="2017" name="Sci. Adv.">
        <title>Population genomics of picophytoplankton unveils novel chromosome hypervariability.</title>
        <authorList>
            <consortium name="DOE Joint Genome Institute"/>
            <person name="Blanc-Mathieu R."/>
            <person name="Krasovec M."/>
            <person name="Hebrard M."/>
            <person name="Yau S."/>
            <person name="Desgranges E."/>
            <person name="Martin J."/>
            <person name="Schackwitz W."/>
            <person name="Kuo A."/>
            <person name="Salin G."/>
            <person name="Donnadieu C."/>
            <person name="Desdevises Y."/>
            <person name="Sanchez-Ferandin S."/>
            <person name="Moreau H."/>
            <person name="Rivals E."/>
            <person name="Grigoriev I.V."/>
            <person name="Grimsley N."/>
            <person name="Eyre-Walker A."/>
            <person name="Piganeau G."/>
        </authorList>
    </citation>
    <scope>NUCLEOTIDE SEQUENCE [LARGE SCALE GENOMIC DNA]</scope>
    <source>
        <strain>RCC 1115</strain>
    </source>
</reference>
<reference key="3">
    <citation type="journal article" date="2015" name="FASEB J.">
        <title>A unique homodimeric NAD+-linked isocitrate dehydrogenase from the smallest autotrophic eukaryote Ostreococcus tauri.</title>
        <authorList>
            <person name="Tang W.G."/>
            <person name="Song P."/>
            <person name="Cao Z.Y."/>
            <person name="Wang P."/>
            <person name="Zhu G.P."/>
        </authorList>
    </citation>
    <scope>FUNCTION</scope>
    <scope>CATALYTIC ACTIVITY</scope>
    <scope>COFACTOR</scope>
    <scope>ACTIVITY REGULATION</scope>
    <scope>BIOPHYSICOCHEMICAL PROPERTIES</scope>
    <scope>SUBUNIT</scope>
    <scope>MUTAGENESIS OF ASP-385 AND MET-386</scope>
</reference>
<reference key="4">
    <citation type="submission" date="2018-12" db="PDB data bank">
        <title>Crystal structure of isocitrate dehydrogenase from Ostreococcus tauri.</title>
        <authorList>
            <person name="Zhu G.P."/>
            <person name="Tang W.G."/>
            <person name="Wang P."/>
        </authorList>
    </citation>
    <scope>X-RAY CRYSTALLOGRAPHY (1.75 ANGSTROMS) OF 61-470 IN COMPLEX WITH ISOCITRATE; NAD AND MAGNESIUM ION</scope>
    <scope>SUBUNIT</scope>
</reference>
<dbReference type="EC" id="1.1.1.41" evidence="2"/>
<dbReference type="EMBL" id="CAID01000013">
    <property type="protein sequence ID" value="CEG00228.1"/>
    <property type="molecule type" value="Genomic_DNA"/>
</dbReference>
<dbReference type="EMBL" id="KZ155784">
    <property type="protein sequence ID" value="OUS46403.1"/>
    <property type="molecule type" value="Genomic_DNA"/>
</dbReference>
<dbReference type="PDB" id="6IXL">
    <property type="method" value="X-ray"/>
    <property type="resolution" value="1.75 A"/>
    <property type="chains" value="A/B/C/D=61-470"/>
</dbReference>
<dbReference type="PDB" id="6IXN">
    <property type="method" value="X-ray"/>
    <property type="resolution" value="1.87 A"/>
    <property type="chains" value="A/B/C/D=61-470"/>
</dbReference>
<dbReference type="PDB" id="6IXT">
    <property type="method" value="X-ray"/>
    <property type="resolution" value="1.78 A"/>
    <property type="chains" value="A/B/C/D=61-470"/>
</dbReference>
<dbReference type="PDB" id="7E2W">
    <property type="method" value="X-ray"/>
    <property type="resolution" value="1.80 A"/>
    <property type="chains" value="A/B/C/D=61-470"/>
</dbReference>
<dbReference type="PDBsum" id="6IXL"/>
<dbReference type="PDBsum" id="6IXN"/>
<dbReference type="PDBsum" id="6IXT"/>
<dbReference type="PDBsum" id="7E2W"/>
<dbReference type="SMR" id="A0A096P8D3"/>
<dbReference type="FunCoup" id="A0A096P8D3">
    <property type="interactions" value="1529"/>
</dbReference>
<dbReference type="STRING" id="70448.A0A096P8D3"/>
<dbReference type="eggNOG" id="KOG1526">
    <property type="taxonomic scope" value="Eukaryota"/>
</dbReference>
<dbReference type="InParanoid" id="A0A096P8D3"/>
<dbReference type="OrthoDB" id="248923at2759"/>
<dbReference type="Proteomes" id="UP000009170">
    <property type="component" value="Chromosome 13"/>
</dbReference>
<dbReference type="Proteomes" id="UP000195557">
    <property type="component" value="Unassembled WGS sequence"/>
</dbReference>
<dbReference type="GO" id="GO:0005739">
    <property type="term" value="C:mitochondrion"/>
    <property type="evidence" value="ECO:0007669"/>
    <property type="project" value="UniProtKB-SubCell"/>
</dbReference>
<dbReference type="GO" id="GO:0004449">
    <property type="term" value="F:isocitrate dehydrogenase (NAD+) activity"/>
    <property type="evidence" value="ECO:0000314"/>
    <property type="project" value="UniProtKB"/>
</dbReference>
<dbReference type="GO" id="GO:0004450">
    <property type="term" value="F:isocitrate dehydrogenase (NADP+) activity"/>
    <property type="evidence" value="ECO:0007669"/>
    <property type="project" value="InterPro"/>
</dbReference>
<dbReference type="GO" id="GO:0000287">
    <property type="term" value="F:magnesium ion binding"/>
    <property type="evidence" value="ECO:0000314"/>
    <property type="project" value="UniProtKB"/>
</dbReference>
<dbReference type="GO" id="GO:0042803">
    <property type="term" value="F:protein homodimerization activity"/>
    <property type="evidence" value="ECO:0000314"/>
    <property type="project" value="UniProtKB"/>
</dbReference>
<dbReference type="GO" id="GO:0006102">
    <property type="term" value="P:isocitrate metabolic process"/>
    <property type="evidence" value="ECO:0000314"/>
    <property type="project" value="UniProtKB"/>
</dbReference>
<dbReference type="GO" id="GO:0019674">
    <property type="term" value="P:NAD metabolic process"/>
    <property type="evidence" value="ECO:0000314"/>
    <property type="project" value="UniProtKB"/>
</dbReference>
<dbReference type="GO" id="GO:0006739">
    <property type="term" value="P:NADP metabolic process"/>
    <property type="evidence" value="ECO:0007669"/>
    <property type="project" value="TreeGrafter"/>
</dbReference>
<dbReference type="GO" id="GO:0006099">
    <property type="term" value="P:tricarboxylic acid cycle"/>
    <property type="evidence" value="ECO:0007669"/>
    <property type="project" value="UniProtKB-KW"/>
</dbReference>
<dbReference type="Gene3D" id="3.40.718.10">
    <property type="entry name" value="Isopropylmalate Dehydrogenase"/>
    <property type="match status" value="1"/>
</dbReference>
<dbReference type="InterPro" id="IPR004790">
    <property type="entry name" value="Isocitrate_DH_NADP"/>
</dbReference>
<dbReference type="InterPro" id="IPR024084">
    <property type="entry name" value="IsoPropMal-DH-like_dom"/>
</dbReference>
<dbReference type="PANTHER" id="PTHR11822:SF21">
    <property type="entry name" value="ISOCITRATE DEHYDROGENASE [NADP], MITOCHONDRIAL"/>
    <property type="match status" value="1"/>
</dbReference>
<dbReference type="PANTHER" id="PTHR11822">
    <property type="entry name" value="NADP-SPECIFIC ISOCITRATE DEHYDROGENASE"/>
    <property type="match status" value="1"/>
</dbReference>
<dbReference type="Pfam" id="PF00180">
    <property type="entry name" value="Iso_dh"/>
    <property type="match status" value="1"/>
</dbReference>
<dbReference type="SMART" id="SM01329">
    <property type="entry name" value="Iso_dh"/>
    <property type="match status" value="1"/>
</dbReference>
<dbReference type="SUPFAM" id="SSF53659">
    <property type="entry name" value="Isocitrate/Isopropylmalate dehydrogenase-like"/>
    <property type="match status" value="1"/>
</dbReference>
<proteinExistence type="evidence at protein level"/>
<protein>
    <recommendedName>
        <fullName evidence="5">Isocitrate dehydrogenase (NAD(+)), mitochondrial</fullName>
        <shortName evidence="4">OtIDH</shortName>
        <ecNumber evidence="2">1.1.1.41</ecNumber>
    </recommendedName>
</protein>